<proteinExistence type="inferred from homology"/>
<reference key="1">
    <citation type="journal article" date="2002" name="Proc. Natl. Acad. Sci. U.S.A.">
        <title>The complete genome of hyperthermophile Methanopyrus kandleri AV19 and monophyly of archaeal methanogens.</title>
        <authorList>
            <person name="Slesarev A.I."/>
            <person name="Mezhevaya K.V."/>
            <person name="Makarova K.S."/>
            <person name="Polushin N.N."/>
            <person name="Shcherbinina O.V."/>
            <person name="Shakhova V.V."/>
            <person name="Belova G.I."/>
            <person name="Aravind L."/>
            <person name="Natale D.A."/>
            <person name="Rogozin I.B."/>
            <person name="Tatusov R.L."/>
            <person name="Wolf Y.I."/>
            <person name="Stetter K.O."/>
            <person name="Malykh A.G."/>
            <person name="Koonin E.V."/>
            <person name="Kozyavkin S.A."/>
        </authorList>
    </citation>
    <scope>NUCLEOTIDE SEQUENCE [LARGE SCALE GENOMIC DNA]</scope>
    <source>
        <strain>AV19 / DSM 6324 / JCM 9639 / NBRC 100938</strain>
    </source>
</reference>
<keyword id="KW-0235">DNA replication</keyword>
<keyword id="KW-0238">DNA-binding</keyword>
<keyword id="KW-0239">DNA-directed DNA polymerase</keyword>
<keyword id="KW-0269">Exonuclease</keyword>
<keyword id="KW-0378">Hydrolase</keyword>
<keyword id="KW-0511">Multifunctional enzyme</keyword>
<keyword id="KW-0540">Nuclease</keyword>
<keyword id="KW-0548">Nucleotidyltransferase</keyword>
<keyword id="KW-1185">Reference proteome</keyword>
<keyword id="KW-0808">Transferase</keyword>
<feature type="chain" id="PRO_0000152576" description="DNA polymerase II large subunit">
    <location>
        <begin position="1"/>
        <end position="1240"/>
    </location>
</feature>
<comment type="function">
    <text evidence="1">Possesses two activities: a DNA synthesis (polymerase) and an exonucleolytic activity that degrades single-stranded DNA in the 3'- to 5'-direction. Has a template-primer preference which is characteristic of a replicative DNA polymerase (By similarity).</text>
</comment>
<comment type="catalytic activity">
    <reaction evidence="2">
        <text>DNA(n) + a 2'-deoxyribonucleoside 5'-triphosphate = DNA(n+1) + diphosphate</text>
        <dbReference type="Rhea" id="RHEA:22508"/>
        <dbReference type="Rhea" id="RHEA-COMP:17339"/>
        <dbReference type="Rhea" id="RHEA-COMP:17340"/>
        <dbReference type="ChEBI" id="CHEBI:33019"/>
        <dbReference type="ChEBI" id="CHEBI:61560"/>
        <dbReference type="ChEBI" id="CHEBI:173112"/>
        <dbReference type="EC" id="2.7.7.7"/>
    </reaction>
</comment>
<comment type="catalytic activity">
    <reaction evidence="2">
        <text>Exonucleolytic cleavage in the 3'- to 5'-direction to yield nucleoside 5'-phosphates.</text>
        <dbReference type="EC" id="3.1.11.1"/>
    </reaction>
</comment>
<comment type="subunit">
    <text evidence="2">Heterodimer of a large subunit and a small subunit.</text>
</comment>
<comment type="similarity">
    <text evidence="2">Belongs to the archaeal DNA polymerase II family.</text>
</comment>
<evidence type="ECO:0000250" key="1"/>
<evidence type="ECO:0000255" key="2">
    <source>
        <dbReference type="HAMAP-Rule" id="MF_00324"/>
    </source>
</evidence>
<name>DP2L_METKA</name>
<accession>Q8TUV3</accession>
<organism>
    <name type="scientific">Methanopyrus kandleri (strain AV19 / DSM 6324 / JCM 9639 / NBRC 100938)</name>
    <dbReference type="NCBI Taxonomy" id="190192"/>
    <lineage>
        <taxon>Archaea</taxon>
        <taxon>Methanobacteriati</taxon>
        <taxon>Methanobacteriota</taxon>
        <taxon>Methanomada group</taxon>
        <taxon>Methanopyri</taxon>
        <taxon>Methanopyrales</taxon>
        <taxon>Methanopyraceae</taxon>
        <taxon>Methanopyrus</taxon>
    </lineage>
</organism>
<dbReference type="EC" id="2.7.7.7" evidence="2"/>
<dbReference type="EC" id="3.1.11.1" evidence="2"/>
<dbReference type="EMBL" id="AE009439">
    <property type="protein sequence ID" value="AAM02863.1"/>
    <property type="molecule type" value="Genomic_DNA"/>
</dbReference>
<dbReference type="RefSeq" id="WP_011020018.1">
    <property type="nucleotide sequence ID" value="NC_003551.1"/>
</dbReference>
<dbReference type="SMR" id="Q8TUV3"/>
<dbReference type="FunCoup" id="Q8TUV3">
    <property type="interactions" value="15"/>
</dbReference>
<dbReference type="STRING" id="190192.MK1650"/>
<dbReference type="PaxDb" id="190192-MK1650"/>
<dbReference type="EnsemblBacteria" id="AAM02863">
    <property type="protein sequence ID" value="AAM02863"/>
    <property type="gene ID" value="MK1650"/>
</dbReference>
<dbReference type="GeneID" id="1478245"/>
<dbReference type="KEGG" id="mka:MK1650"/>
<dbReference type="PATRIC" id="fig|190192.8.peg.1813"/>
<dbReference type="HOGENOM" id="CLU_001154_0_0_2"/>
<dbReference type="InParanoid" id="Q8TUV3"/>
<dbReference type="OrthoDB" id="7529at2157"/>
<dbReference type="Proteomes" id="UP000001826">
    <property type="component" value="Chromosome"/>
</dbReference>
<dbReference type="GO" id="GO:0003677">
    <property type="term" value="F:DNA binding"/>
    <property type="evidence" value="ECO:0007669"/>
    <property type="project" value="UniProtKB-UniRule"/>
</dbReference>
<dbReference type="GO" id="GO:0003887">
    <property type="term" value="F:DNA-directed DNA polymerase activity"/>
    <property type="evidence" value="ECO:0007669"/>
    <property type="project" value="UniProtKB-UniRule"/>
</dbReference>
<dbReference type="GO" id="GO:0008310">
    <property type="term" value="F:single-stranded DNA 3'-5' DNA exonuclease activity"/>
    <property type="evidence" value="ECO:0007669"/>
    <property type="project" value="UniProtKB-EC"/>
</dbReference>
<dbReference type="GO" id="GO:0006308">
    <property type="term" value="P:DNA catabolic process"/>
    <property type="evidence" value="ECO:0007669"/>
    <property type="project" value="UniProtKB-UniRule"/>
</dbReference>
<dbReference type="GO" id="GO:0006261">
    <property type="term" value="P:DNA-templated DNA replication"/>
    <property type="evidence" value="ECO:0007669"/>
    <property type="project" value="UniProtKB-UniRule"/>
</dbReference>
<dbReference type="HAMAP" id="MF_00324">
    <property type="entry name" value="DNApol_II_L_arch"/>
    <property type="match status" value="1"/>
</dbReference>
<dbReference type="InterPro" id="IPR004475">
    <property type="entry name" value="PolC_DP2"/>
</dbReference>
<dbReference type="InterPro" id="IPR056172">
    <property type="entry name" value="PolC_DP2_cat_dom"/>
</dbReference>
<dbReference type="InterPro" id="IPR056171">
    <property type="entry name" value="PolC_DP2_central_dom"/>
</dbReference>
<dbReference type="InterPro" id="IPR016033">
    <property type="entry name" value="PolC_DP2_N"/>
</dbReference>
<dbReference type="NCBIfam" id="TIGR00354">
    <property type="entry name" value="polC"/>
    <property type="match status" value="1"/>
</dbReference>
<dbReference type="NCBIfam" id="NF003103">
    <property type="entry name" value="PRK04023.1"/>
    <property type="match status" value="1"/>
</dbReference>
<dbReference type="PANTHER" id="PTHR42210">
    <property type="entry name" value="DNA POLYMERASE II LARGE SUBUNIT"/>
    <property type="match status" value="1"/>
</dbReference>
<dbReference type="PANTHER" id="PTHR42210:SF1">
    <property type="entry name" value="DNA POLYMERASE II LARGE SUBUNIT"/>
    <property type="match status" value="1"/>
</dbReference>
<dbReference type="Pfam" id="PF24846">
    <property type="entry name" value="PolC_DP2_cat"/>
    <property type="match status" value="1"/>
</dbReference>
<dbReference type="Pfam" id="PF24844">
    <property type="entry name" value="PolC_DP2_central"/>
    <property type="match status" value="2"/>
</dbReference>
<dbReference type="Pfam" id="PF03833">
    <property type="entry name" value="PolC_DP2_N"/>
    <property type="match status" value="2"/>
</dbReference>
<dbReference type="PIRSF" id="PIRSF016275">
    <property type="entry name" value="PolC_DP2"/>
    <property type="match status" value="1"/>
</dbReference>
<protein>
    <recommendedName>
        <fullName evidence="2">DNA polymerase II large subunit</fullName>
        <shortName evidence="2">Pol II</shortName>
        <ecNumber evidence="2">2.7.7.7</ecNumber>
    </recommendedName>
    <alternativeName>
        <fullName evidence="2">Exodeoxyribonuclease large subunit</fullName>
        <ecNumber evidence="2">3.1.11.1</ecNumber>
    </alternativeName>
</protein>
<sequence>MNRAREELDRYRETLEEVSSRFVDVATKARQRREDPKPEPEVMLATSIGERVEGLLQVENVADRLEELEEELGDREEATFRIVEEVIKGELKVKGDLPLHKRIDYAVRIGLAVLTEAVVSAPLEGIAAVEIRERGTGHRVVDESEPPHEEPKLVCTECGKEVDPENCYLAVKYAGPIRAAGGTAAALSALLADYARQVAGLPRFNPDDFDHDLVGRYVEEVVTYLDKVGSFQYNPSEEEVELVAKNIPIEIDGEPTEEVEVQGHRDIPHLPNQLRGGALLVICEGICQKAPKLIKRVEKYGIDGWEFLEKLVNKGSDDEEEGEEEKTKIKPNDKYMGELVAGRPLLSHPSAKGGFRLRYGRARNTGFAAVGVHPSLMYVTKGFIVIGTQLKVERPGKAACVLPVTEIEPPVVKLRDGSVVRLDDPREAKELVEKDEIEEILDLGEMLVAVGEFIENNHPLVPPAYCPEWWVKEVPDVVKVIGLRKNLPNDVFEKLKDVPLKRLVKEASRLSGNGNNLDGFLNGPVKVARSIVELVRKEVIPRLSSPERMSVEEAIELSREYGVPFHPKYTFLWHDVKPKDVDELREALEVAGSEWGNLRVEFENDGEIKRILEDLLVPHRLEDDTIVVEEPWASALLAQLGYDPESGEFREQDEDLDYLLDYLVIRDETCRYVSKLAGFPIREKAPTRIGARMGRPEKARERKMSPPPHVLFPIGIAGGNQRDIMKFHRGESEDTDRVEVCYRICPECDRLVPYRVCPFCGTETVQYCNRCDEPADECDCEEPDPVVRADIERNDDPYSSLPVRELVRRAEEEVGTTDTLKGVKGMTSRLKMPEPLQKGILRAKRDLFVFKDGTLRFDCNDCPLTHVRLKEVGLTPFKARLLGFERDINGDPVVSEDQVVELYPQDVVLPRKAAEWAVRVCQYLDDLLRKYYGLEPVYGVEKPEDLIGHLIVTLAPHTSCGVVGRVVGIADINCWYNHPIINAARRRNCDGDEDAFMLLLDVLLNFSRLYLPDKRGGLMDAPLVLTAVVDPYEIDDEVWNMDVCGDYPLELYRKALEYADAGEAEELIERLEDRLDLPRGLQFTHDTEAIDLGPTVTRYSRLEKMEEKLEEQLDLARRIRAVDESDVAKIVLDSHFLPDIKGNLRKFGRQKFRCSRCNAKFNVPPLSGKCPRCGGDVLLTIYPATATKYLEPAKRLVEEFGTHDEEWRTIASEVELLEEEAKTLFGSDHSVSLKKFFGET</sequence>
<gene>
    <name evidence="2" type="primary">polC</name>
    <name type="ordered locus">MK1650</name>
</gene>